<organism>
    <name type="scientific">Conus striatus</name>
    <name type="common">Striated cone</name>
    <dbReference type="NCBI Taxonomy" id="6493"/>
    <lineage>
        <taxon>Eukaryota</taxon>
        <taxon>Metazoa</taxon>
        <taxon>Spiralia</taxon>
        <taxon>Lophotrochozoa</taxon>
        <taxon>Mollusca</taxon>
        <taxon>Gastropoda</taxon>
        <taxon>Caenogastropoda</taxon>
        <taxon>Neogastropoda</taxon>
        <taxon>Conoidea</taxon>
        <taxon>Conidae</taxon>
        <taxon>Conus</taxon>
        <taxon>Pionoconus</taxon>
    </lineage>
</organism>
<protein>
    <recommendedName>
        <fullName>Omega-conotoxin-like 2</fullName>
    </recommendedName>
</protein>
<proteinExistence type="evidence at transcript level"/>
<sequence>MKLTCVVIVAVLLLTACQLITADDSRGTQKHRSLRSTTKVSKAADCIEAGNYCGPTVMKLCCGFCSPYSKICMNYPKN</sequence>
<evidence type="ECO:0000250" key="1"/>
<evidence type="ECO:0000255" key="2"/>
<evidence type="ECO:0000305" key="3"/>
<accession>Q5K0D8</accession>
<keyword id="KW-0108">Calcium channel impairing toxin</keyword>
<keyword id="KW-1015">Disulfide bond</keyword>
<keyword id="KW-0872">Ion channel impairing toxin</keyword>
<keyword id="KW-0960">Knottin</keyword>
<keyword id="KW-0528">Neurotoxin</keyword>
<keyword id="KW-0638">Presynaptic neurotoxin</keyword>
<keyword id="KW-0964">Secreted</keyword>
<keyword id="KW-0732">Signal</keyword>
<keyword id="KW-0800">Toxin</keyword>
<keyword id="KW-1218">Voltage-gated calcium channel impairing toxin</keyword>
<feature type="signal peptide" evidence="2">
    <location>
        <begin position="1"/>
        <end position="22"/>
    </location>
</feature>
<feature type="propeptide" id="PRO_0000034940" evidence="1">
    <location>
        <begin position="23"/>
        <end position="42"/>
    </location>
</feature>
<feature type="peptide" id="PRO_0000034941" description="Omega-conotoxin-like 2">
    <location>
        <begin position="43"/>
        <end position="78"/>
    </location>
</feature>
<feature type="disulfide bond" evidence="1">
    <location>
        <begin position="46"/>
        <end position="62"/>
    </location>
</feature>
<feature type="disulfide bond" evidence="1">
    <location>
        <begin position="53"/>
        <end position="65"/>
    </location>
</feature>
<feature type="disulfide bond" evidence="1">
    <location>
        <begin position="61"/>
        <end position="72"/>
    </location>
</feature>
<name>O162_CONST</name>
<reference key="1">
    <citation type="journal article" date="2005" name="Peptides">
        <title>Direct cDNA cloning of novel conopeptide precursors of the O-superfamily.</title>
        <authorList>
            <person name="Kauferstein S."/>
            <person name="Melaun C."/>
            <person name="Mebs D."/>
        </authorList>
    </citation>
    <scope>NUCLEOTIDE SEQUENCE [MRNA]</scope>
    <source>
        <tissue>Venom duct</tissue>
    </source>
</reference>
<dbReference type="EMBL" id="AJ851170">
    <property type="protein sequence ID" value="CAH64843.1"/>
    <property type="molecule type" value="mRNA"/>
</dbReference>
<dbReference type="SMR" id="Q5K0D8"/>
<dbReference type="ConoServer" id="1059">
    <property type="toxin name" value="Conotoxin-2 precursor"/>
</dbReference>
<dbReference type="GO" id="GO:0005576">
    <property type="term" value="C:extracellular region"/>
    <property type="evidence" value="ECO:0007669"/>
    <property type="project" value="UniProtKB-SubCell"/>
</dbReference>
<dbReference type="GO" id="GO:0044231">
    <property type="term" value="C:host cell presynaptic membrane"/>
    <property type="evidence" value="ECO:0007669"/>
    <property type="project" value="UniProtKB-KW"/>
</dbReference>
<dbReference type="GO" id="GO:0005246">
    <property type="term" value="F:calcium channel regulator activity"/>
    <property type="evidence" value="ECO:0007669"/>
    <property type="project" value="UniProtKB-KW"/>
</dbReference>
<dbReference type="GO" id="GO:0008200">
    <property type="term" value="F:ion channel inhibitor activity"/>
    <property type="evidence" value="ECO:0007669"/>
    <property type="project" value="InterPro"/>
</dbReference>
<dbReference type="GO" id="GO:0090729">
    <property type="term" value="F:toxin activity"/>
    <property type="evidence" value="ECO:0007669"/>
    <property type="project" value="UniProtKB-KW"/>
</dbReference>
<dbReference type="InterPro" id="IPR004214">
    <property type="entry name" value="Conotoxin"/>
</dbReference>
<dbReference type="InterPro" id="IPR012321">
    <property type="entry name" value="Conotoxin_omega-typ_CS"/>
</dbReference>
<dbReference type="Pfam" id="PF02950">
    <property type="entry name" value="Conotoxin"/>
    <property type="match status" value="1"/>
</dbReference>
<dbReference type="PROSITE" id="PS60004">
    <property type="entry name" value="OMEGA_CONOTOXIN"/>
    <property type="match status" value="1"/>
</dbReference>
<comment type="function">
    <text evidence="1">Omega-conotoxins act at presynaptic membranes, they bind and block voltage-gated calcium channels (Cav).</text>
</comment>
<comment type="subcellular location">
    <subcellularLocation>
        <location evidence="1">Secreted</location>
    </subcellularLocation>
</comment>
<comment type="tissue specificity">
    <text>Expressed by the venom duct.</text>
</comment>
<comment type="domain">
    <text evidence="1">The presence of a 'disulfide through disulfide knot' structurally defines this protein as a knottin.</text>
</comment>
<comment type="domain">
    <text>The cysteine framework is VI/VII (C-C-CC-C-C).</text>
</comment>
<comment type="similarity">
    <text evidence="3">Belongs to the conotoxin O1 superfamily.</text>
</comment>